<feature type="chain" id="PRO_0000312310" description="Zinc transporter ZIP13">
    <location>
        <begin position="1"/>
        <end position="361"/>
    </location>
</feature>
<feature type="topological domain" description="Lumenal" evidence="2">
    <location>
        <begin position="1"/>
        <end position="6"/>
    </location>
</feature>
<feature type="transmembrane region" description="Helical" evidence="2">
    <location>
        <begin position="7"/>
        <end position="27"/>
    </location>
</feature>
<feature type="topological domain" description="Cytoplasmic" evidence="2">
    <location>
        <begin position="28"/>
        <end position="68"/>
    </location>
</feature>
<feature type="transmembrane region" description="Helical" evidence="2">
    <location>
        <begin position="69"/>
        <end position="89"/>
    </location>
</feature>
<feature type="topological domain" description="Lumenal" evidence="2">
    <location>
        <begin position="90"/>
        <end position="108"/>
    </location>
</feature>
<feature type="transmembrane region" description="Helical" evidence="2">
    <location>
        <begin position="109"/>
        <end position="129"/>
    </location>
</feature>
<feature type="topological domain" description="Cytoplasmic" evidence="2">
    <location>
        <begin position="130"/>
        <end position="150"/>
    </location>
</feature>
<feature type="transmembrane region" description="Helical" evidence="2">
    <location>
        <begin position="151"/>
        <end position="171"/>
    </location>
</feature>
<feature type="topological domain" description="Lumenal" evidence="2">
    <location>
        <begin position="172"/>
        <end position="232"/>
    </location>
</feature>
<feature type="transmembrane region" description="Helical" evidence="2">
    <location>
        <begin position="233"/>
        <end position="253"/>
    </location>
</feature>
<feature type="topological domain" description="Cytoplasmic" evidence="2">
    <location>
        <begin position="254"/>
        <end position="275"/>
    </location>
</feature>
<feature type="transmembrane region" description="Helical" evidence="2">
    <location>
        <begin position="276"/>
        <end position="296"/>
    </location>
</feature>
<feature type="topological domain" description="Lumenal" evidence="2">
    <location>
        <begin position="297"/>
        <end position="306"/>
    </location>
</feature>
<feature type="transmembrane region" description="Helical" evidence="2">
    <location>
        <begin position="307"/>
        <end position="327"/>
    </location>
</feature>
<feature type="topological domain" description="Cytoplasmic" evidence="2">
    <location>
        <begin position="328"/>
        <end position="339"/>
    </location>
</feature>
<feature type="transmembrane region" description="Helical" evidence="2">
    <location>
        <begin position="340"/>
        <end position="360"/>
    </location>
</feature>
<feature type="topological domain" description="Lumenal" evidence="2">
    <location>
        <position position="361"/>
    </location>
</feature>
<feature type="short sequence motif" description="XEXPHE-motif">
    <location>
        <begin position="254"/>
        <end position="259"/>
    </location>
</feature>
<feature type="splice variant" id="VSP_029820" description="In isoform 3." evidence="5 6">
    <location>
        <begin position="1"/>
        <end position="167"/>
    </location>
</feature>
<feature type="splice variant" id="VSP_029821" description="In isoform 2." evidence="5">
    <original>P</original>
    <variation>PATGLAWPVSAPPA</variation>
    <location>
        <position position="138"/>
    </location>
</feature>
<feature type="splice variant" id="VSP_029822" description="In isoform 3." evidence="5 6">
    <location>
        <begin position="179"/>
        <end position="212"/>
    </location>
</feature>
<feature type="mutagenesis site" description="Partially rescue the unresponsiveness of osteoblasts and fibroblasts lacking Slc39a13 against BMP4 and TGFB1." evidence="3">
    <original>G</original>
    <variation>D</variation>
    <location>
        <position position="74"/>
    </location>
</feature>
<feature type="sequence conflict" description="In Ref. 3; AAH20106." evidence="8" ref="3">
    <original>F</original>
    <variation>L</variation>
    <location>
        <position position="169"/>
    </location>
</feature>
<feature type="sequence conflict" description="In Ref. 3; AAH20106." evidence="8" ref="3">
    <original>K</original>
    <variation>Q</variation>
    <location>
        <position position="173"/>
    </location>
</feature>
<feature type="sequence conflict" description="In Ref. 3; AAH20106." evidence="8" ref="3">
    <original>V</original>
    <variation>A</variation>
    <location>
        <position position="360"/>
    </location>
</feature>
<keyword id="KW-0025">Alternative splicing</keyword>
<keyword id="KW-0968">Cytoplasmic vesicle</keyword>
<keyword id="KW-0256">Endoplasmic reticulum</keyword>
<keyword id="KW-0333">Golgi apparatus</keyword>
<keyword id="KW-0406">Ion transport</keyword>
<keyword id="KW-0472">Membrane</keyword>
<keyword id="KW-1185">Reference proteome</keyword>
<keyword id="KW-0812">Transmembrane</keyword>
<keyword id="KW-1133">Transmembrane helix</keyword>
<keyword id="KW-0813">Transport</keyword>
<keyword id="KW-0862">Zinc</keyword>
<keyword id="KW-0864">Zinc transport</keyword>
<comment type="function">
    <text evidence="3 4">Functions as a zinc transporter transporting Zn(2+) from the Golgi apparatus to the cytosol and thus influences the zinc level at least in areas of the cytosol (PubMed:18985159). May regulate beige adipocyte differentiation (PubMed:28854265).</text>
</comment>
<comment type="catalytic activity">
    <reaction evidence="3">
        <text>Zn(2+)(in) = Zn(2+)(out)</text>
        <dbReference type="Rhea" id="RHEA:29351"/>
        <dbReference type="ChEBI" id="CHEBI:29105"/>
    </reaction>
</comment>
<comment type="subunit">
    <text evidence="1">Homodimer.</text>
</comment>
<comment type="subcellular location">
    <subcellularLocation>
        <location evidence="3">Golgi apparatus membrane</location>
        <topology evidence="1">Multi-pass membrane protein</topology>
    </subcellularLocation>
    <subcellularLocation>
        <location evidence="1">Cytoplasmic vesicle membrane</location>
    </subcellularLocation>
    <subcellularLocation>
        <location evidence="1">Endoplasmic reticulum membrane</location>
    </subcellularLocation>
</comment>
<comment type="alternative products">
    <event type="alternative splicing"/>
    <isoform>
        <id>Q8BZH0-1</id>
        <name>1</name>
        <sequence type="displayed"/>
    </isoform>
    <isoform>
        <id>Q8BZH0-2</id>
        <name>2</name>
        <sequence type="described" ref="VSP_029821"/>
    </isoform>
    <isoform>
        <id>Q8BZH0-3</id>
        <name>3</name>
        <sequence type="described" ref="VSP_029820 VSP_029822"/>
    </isoform>
</comment>
<comment type="tissue specificity">
    <text evidence="3">Highly expressed in some tissues such as bone and eye (PubMed:18985159). Expressed in osteoblasts of tibia and of alveolar bone, in proliferative zone of growth plate, and in odontoblasts on the forming of the dentine of crown in molar tooth (PubMed:18985159). Also expressed fibroblasts in reticular layer of dermis of skin (PubMed:18985159).</text>
</comment>
<comment type="disruption phenotype">
    <text evidence="3">Homozygous knockout mice for Slc39a13 show growth retardation and results in a generalized skeletal and connective tissue disorder, namely develop progressive kyphosis after 3 or 4 weeks of age.</text>
</comment>
<comment type="similarity">
    <text evidence="8">Belongs to the ZIP transporter (TC 2.A.5) family.</text>
</comment>
<organism>
    <name type="scientific">Mus musculus</name>
    <name type="common">Mouse</name>
    <dbReference type="NCBI Taxonomy" id="10090"/>
    <lineage>
        <taxon>Eukaryota</taxon>
        <taxon>Metazoa</taxon>
        <taxon>Chordata</taxon>
        <taxon>Craniata</taxon>
        <taxon>Vertebrata</taxon>
        <taxon>Euteleostomi</taxon>
        <taxon>Mammalia</taxon>
        <taxon>Eutheria</taxon>
        <taxon>Euarchontoglires</taxon>
        <taxon>Glires</taxon>
        <taxon>Rodentia</taxon>
        <taxon>Myomorpha</taxon>
        <taxon>Muroidea</taxon>
        <taxon>Muridae</taxon>
        <taxon>Murinae</taxon>
        <taxon>Mus</taxon>
        <taxon>Mus</taxon>
    </lineage>
</organism>
<sequence>MPGCPCPGCGMAGQRLLFLTVLALELLERAGGSQPALRSLGAAAACRLDNKESESWGALLSGERLDTWICSLLGSLMVGLSGVFPLLVIPLEMGTLLQSEAGAWRLRQLLSFALGGLLGNVFLHLLPEAWAYTCNITPGGEGQSLQRQQQLGLWVIAGFLTFLALEKMFLNSKEDPSQAPSKDPTAAALNGGHCLAQPAAEPGLRAVVRNLKVSGYLNLLANTIDNFTHGLAVAASFLVSKKIGLLTTMAILLHEIPHEVGDFAILLRAGFDRWTAAKLQFSTALGGLLGACFAICTQSPKGVEETVVWILPFTSGGFLYIALVNVLPDLLEEDDPWHSLQQVLLLCSGVLVMVLLSLFVE</sequence>
<proteinExistence type="evidence at protein level"/>
<reference key="1">
    <citation type="journal article" date="2005" name="Science">
        <title>The transcriptional landscape of the mammalian genome.</title>
        <authorList>
            <person name="Carninci P."/>
            <person name="Kasukawa T."/>
            <person name="Katayama S."/>
            <person name="Gough J."/>
            <person name="Frith M.C."/>
            <person name="Maeda N."/>
            <person name="Oyama R."/>
            <person name="Ravasi T."/>
            <person name="Lenhard B."/>
            <person name="Wells C."/>
            <person name="Kodzius R."/>
            <person name="Shimokawa K."/>
            <person name="Bajic V.B."/>
            <person name="Brenner S.E."/>
            <person name="Batalov S."/>
            <person name="Forrest A.R."/>
            <person name="Zavolan M."/>
            <person name="Davis M.J."/>
            <person name="Wilming L.G."/>
            <person name="Aidinis V."/>
            <person name="Allen J.E."/>
            <person name="Ambesi-Impiombato A."/>
            <person name="Apweiler R."/>
            <person name="Aturaliya R.N."/>
            <person name="Bailey T.L."/>
            <person name="Bansal M."/>
            <person name="Baxter L."/>
            <person name="Beisel K.W."/>
            <person name="Bersano T."/>
            <person name="Bono H."/>
            <person name="Chalk A.M."/>
            <person name="Chiu K.P."/>
            <person name="Choudhary V."/>
            <person name="Christoffels A."/>
            <person name="Clutterbuck D.R."/>
            <person name="Crowe M.L."/>
            <person name="Dalla E."/>
            <person name="Dalrymple B.P."/>
            <person name="de Bono B."/>
            <person name="Della Gatta G."/>
            <person name="di Bernardo D."/>
            <person name="Down T."/>
            <person name="Engstrom P."/>
            <person name="Fagiolini M."/>
            <person name="Faulkner G."/>
            <person name="Fletcher C.F."/>
            <person name="Fukushima T."/>
            <person name="Furuno M."/>
            <person name="Futaki S."/>
            <person name="Gariboldi M."/>
            <person name="Georgii-Hemming P."/>
            <person name="Gingeras T.R."/>
            <person name="Gojobori T."/>
            <person name="Green R.E."/>
            <person name="Gustincich S."/>
            <person name="Harbers M."/>
            <person name="Hayashi Y."/>
            <person name="Hensch T.K."/>
            <person name="Hirokawa N."/>
            <person name="Hill D."/>
            <person name="Huminiecki L."/>
            <person name="Iacono M."/>
            <person name="Ikeo K."/>
            <person name="Iwama A."/>
            <person name="Ishikawa T."/>
            <person name="Jakt M."/>
            <person name="Kanapin A."/>
            <person name="Katoh M."/>
            <person name="Kawasawa Y."/>
            <person name="Kelso J."/>
            <person name="Kitamura H."/>
            <person name="Kitano H."/>
            <person name="Kollias G."/>
            <person name="Krishnan S.P."/>
            <person name="Kruger A."/>
            <person name="Kummerfeld S.K."/>
            <person name="Kurochkin I.V."/>
            <person name="Lareau L.F."/>
            <person name="Lazarevic D."/>
            <person name="Lipovich L."/>
            <person name="Liu J."/>
            <person name="Liuni S."/>
            <person name="McWilliam S."/>
            <person name="Madan Babu M."/>
            <person name="Madera M."/>
            <person name="Marchionni L."/>
            <person name="Matsuda H."/>
            <person name="Matsuzawa S."/>
            <person name="Miki H."/>
            <person name="Mignone F."/>
            <person name="Miyake S."/>
            <person name="Morris K."/>
            <person name="Mottagui-Tabar S."/>
            <person name="Mulder N."/>
            <person name="Nakano N."/>
            <person name="Nakauchi H."/>
            <person name="Ng P."/>
            <person name="Nilsson R."/>
            <person name="Nishiguchi S."/>
            <person name="Nishikawa S."/>
            <person name="Nori F."/>
            <person name="Ohara O."/>
            <person name="Okazaki Y."/>
            <person name="Orlando V."/>
            <person name="Pang K.C."/>
            <person name="Pavan W.J."/>
            <person name="Pavesi G."/>
            <person name="Pesole G."/>
            <person name="Petrovsky N."/>
            <person name="Piazza S."/>
            <person name="Reed J."/>
            <person name="Reid J.F."/>
            <person name="Ring B.Z."/>
            <person name="Ringwald M."/>
            <person name="Rost B."/>
            <person name="Ruan Y."/>
            <person name="Salzberg S.L."/>
            <person name="Sandelin A."/>
            <person name="Schneider C."/>
            <person name="Schoenbach C."/>
            <person name="Sekiguchi K."/>
            <person name="Semple C.A."/>
            <person name="Seno S."/>
            <person name="Sessa L."/>
            <person name="Sheng Y."/>
            <person name="Shibata Y."/>
            <person name="Shimada H."/>
            <person name="Shimada K."/>
            <person name="Silva D."/>
            <person name="Sinclair B."/>
            <person name="Sperling S."/>
            <person name="Stupka E."/>
            <person name="Sugiura K."/>
            <person name="Sultana R."/>
            <person name="Takenaka Y."/>
            <person name="Taki K."/>
            <person name="Tammoja K."/>
            <person name="Tan S.L."/>
            <person name="Tang S."/>
            <person name="Taylor M.S."/>
            <person name="Tegner J."/>
            <person name="Teichmann S.A."/>
            <person name="Ueda H.R."/>
            <person name="van Nimwegen E."/>
            <person name="Verardo R."/>
            <person name="Wei C.L."/>
            <person name="Yagi K."/>
            <person name="Yamanishi H."/>
            <person name="Zabarovsky E."/>
            <person name="Zhu S."/>
            <person name="Zimmer A."/>
            <person name="Hide W."/>
            <person name="Bult C."/>
            <person name="Grimmond S.M."/>
            <person name="Teasdale R.D."/>
            <person name="Liu E.T."/>
            <person name="Brusic V."/>
            <person name="Quackenbush J."/>
            <person name="Wahlestedt C."/>
            <person name="Mattick J.S."/>
            <person name="Hume D.A."/>
            <person name="Kai C."/>
            <person name="Sasaki D."/>
            <person name="Tomaru Y."/>
            <person name="Fukuda S."/>
            <person name="Kanamori-Katayama M."/>
            <person name="Suzuki M."/>
            <person name="Aoki J."/>
            <person name="Arakawa T."/>
            <person name="Iida J."/>
            <person name="Imamura K."/>
            <person name="Itoh M."/>
            <person name="Kato T."/>
            <person name="Kawaji H."/>
            <person name="Kawagashira N."/>
            <person name="Kawashima T."/>
            <person name="Kojima M."/>
            <person name="Kondo S."/>
            <person name="Konno H."/>
            <person name="Nakano K."/>
            <person name="Ninomiya N."/>
            <person name="Nishio T."/>
            <person name="Okada M."/>
            <person name="Plessy C."/>
            <person name="Shibata K."/>
            <person name="Shiraki T."/>
            <person name="Suzuki S."/>
            <person name="Tagami M."/>
            <person name="Waki K."/>
            <person name="Watahiki A."/>
            <person name="Okamura-Oho Y."/>
            <person name="Suzuki H."/>
            <person name="Kawai J."/>
            <person name="Hayashizaki Y."/>
        </authorList>
    </citation>
    <scope>NUCLEOTIDE SEQUENCE [LARGE SCALE MRNA] (ISOFORMS 1 AND 3)</scope>
    <source>
        <strain>C57BL/6J</strain>
        <strain>NOD</strain>
        <tissue>Spleen</tissue>
        <tissue>Urinary bladder</tissue>
    </source>
</reference>
<reference key="2">
    <citation type="journal article" date="2009" name="PLoS Biol.">
        <title>Lineage-specific biology revealed by a finished genome assembly of the mouse.</title>
        <authorList>
            <person name="Church D.M."/>
            <person name="Goodstadt L."/>
            <person name="Hillier L.W."/>
            <person name="Zody M.C."/>
            <person name="Goldstein S."/>
            <person name="She X."/>
            <person name="Bult C.J."/>
            <person name="Agarwala R."/>
            <person name="Cherry J.L."/>
            <person name="DiCuccio M."/>
            <person name="Hlavina W."/>
            <person name="Kapustin Y."/>
            <person name="Meric P."/>
            <person name="Maglott D."/>
            <person name="Birtle Z."/>
            <person name="Marques A.C."/>
            <person name="Graves T."/>
            <person name="Zhou S."/>
            <person name="Teague B."/>
            <person name="Potamousis K."/>
            <person name="Churas C."/>
            <person name="Place M."/>
            <person name="Herschleb J."/>
            <person name="Runnheim R."/>
            <person name="Forrest D."/>
            <person name="Amos-Landgraf J."/>
            <person name="Schwartz D.C."/>
            <person name="Cheng Z."/>
            <person name="Lindblad-Toh K."/>
            <person name="Eichler E.E."/>
            <person name="Ponting C.P."/>
        </authorList>
    </citation>
    <scope>NUCLEOTIDE SEQUENCE [LARGE SCALE GENOMIC DNA]</scope>
    <source>
        <strain>C57BL/6J</strain>
    </source>
</reference>
<reference key="3">
    <citation type="journal article" date="2004" name="Genome Res.">
        <title>The status, quality, and expansion of the NIH full-length cDNA project: the Mammalian Gene Collection (MGC).</title>
        <authorList>
            <consortium name="The MGC Project Team"/>
        </authorList>
    </citation>
    <scope>NUCLEOTIDE SEQUENCE [LARGE SCALE MRNA] (ISOFORMS 1; 2 AND 3)</scope>
    <source>
        <strain>Czech II</strain>
        <tissue>Brain</tissue>
        <tissue>Mammary tumor</tissue>
        <tissue>Testis</tissue>
    </source>
</reference>
<reference key="4">
    <citation type="journal article" date="2008" name="PLoS ONE">
        <title>The zinc transporter SLC39A13/ZIP13 is required for connective tissue development; its involvement in BMP/TGF-beta signaling pathways.</title>
        <authorList>
            <person name="Fukada T."/>
            <person name="Civic N."/>
            <person name="Furuichi T."/>
            <person name="Shimoda S."/>
            <person name="Mishima K."/>
            <person name="Higashiyama H."/>
            <person name="Idaira Y."/>
            <person name="Asada Y."/>
            <person name="Kitamura H."/>
            <person name="Yamasaki S."/>
            <person name="Hojyo S."/>
            <person name="Nakayama M."/>
            <person name="Ohara O."/>
            <person name="Koseki H."/>
            <person name="Dos Santos H.G."/>
            <person name="Bonafe L."/>
            <person name="Ha-Vinh R."/>
            <person name="Zankl A."/>
            <person name="Unger S."/>
            <person name="Kraenzlin M.E."/>
            <person name="Beckmann J.S."/>
            <person name="Saito I."/>
            <person name="Rivolta C."/>
            <person name="Ikegawa S."/>
            <person name="Superti-Furga A."/>
            <person name="Hirano T."/>
        </authorList>
    </citation>
    <scope>FUNCTION</scope>
    <scope>TRANSPORTER ACTIVITY</scope>
    <scope>DISRUPTION PHENOTYPE</scope>
    <scope>TISSUE SPECIFICITY</scope>
    <scope>MUTAGENESIS OF GLY-74</scope>
</reference>
<reference key="5">
    <citation type="journal article" date="2017" name="PLoS Genet.">
        <title>Zinc transporter ZIP13 suppresses beige adipocyte biogenesis and energy expenditure by regulating C/EBP-beta expression.</title>
        <authorList>
            <person name="Fukunaka A."/>
            <person name="Fukada T."/>
            <person name="Bhin J."/>
            <person name="Suzuki L."/>
            <person name="Tsuzuki T."/>
            <person name="Takamine Y."/>
            <person name="Bin B.H."/>
            <person name="Yoshihara T."/>
            <person name="Ichinoseki-Sekine N."/>
            <person name="Naito H."/>
            <person name="Miyatsuka T."/>
            <person name="Takamiya S."/>
            <person name="Sasaki T."/>
            <person name="Inagaki T."/>
            <person name="Kitamura T."/>
            <person name="Kajimura S."/>
            <person name="Watada H."/>
            <person name="Fujitani Y."/>
        </authorList>
    </citation>
    <scope>FUNCTION</scope>
</reference>
<protein>
    <recommendedName>
        <fullName evidence="7">Zinc transporter ZIP13</fullName>
    </recommendedName>
    <alternativeName>
        <fullName>Solute carrier family 39 member 13</fullName>
    </alternativeName>
    <alternativeName>
        <fullName>Zrt- and Irt-like protein 13</fullName>
        <shortName>ZIP-13</shortName>
    </alternativeName>
</protein>
<dbReference type="EMBL" id="AK003191">
    <property type="protein sequence ID" value="BAB22631.1"/>
    <property type="molecule type" value="mRNA"/>
</dbReference>
<dbReference type="EMBL" id="AK035296">
    <property type="protein sequence ID" value="BAC29020.1"/>
    <property type="molecule type" value="mRNA"/>
</dbReference>
<dbReference type="EMBL" id="AK156951">
    <property type="protein sequence ID" value="BAE33911.1"/>
    <property type="molecule type" value="mRNA"/>
</dbReference>
<dbReference type="EMBL" id="AL691439">
    <property type="status" value="NOT_ANNOTATED_CDS"/>
    <property type="molecule type" value="Genomic_DNA"/>
</dbReference>
<dbReference type="EMBL" id="BC100463">
    <property type="protein sequence ID" value="AAI00464.1"/>
    <property type="molecule type" value="mRNA"/>
</dbReference>
<dbReference type="EMBL" id="BC020106">
    <property type="protein sequence ID" value="AAH20106.1"/>
    <property type="molecule type" value="mRNA"/>
</dbReference>
<dbReference type="EMBL" id="BC125525">
    <property type="protein sequence ID" value="AAI25526.1"/>
    <property type="molecule type" value="mRNA"/>
</dbReference>
<dbReference type="CCDS" id="CCDS16424.1">
    <molecule id="Q8BZH0-1"/>
</dbReference>
<dbReference type="CCDS" id="CCDS71095.1">
    <molecule id="Q8BZH0-2"/>
</dbReference>
<dbReference type="RefSeq" id="NP_001277694.1">
    <molecule id="Q8BZH0-2"/>
    <property type="nucleotide sequence ID" value="NM_001290765.2"/>
</dbReference>
<dbReference type="RefSeq" id="NP_080997.1">
    <molecule id="Q8BZH0-1"/>
    <property type="nucleotide sequence ID" value="NM_026721.4"/>
</dbReference>
<dbReference type="RefSeq" id="XP_006500162.1">
    <molecule id="Q8BZH0-2"/>
    <property type="nucleotide sequence ID" value="XM_006500099.5"/>
</dbReference>
<dbReference type="RefSeq" id="XP_017174725.1">
    <molecule id="Q8BZH0-1"/>
    <property type="nucleotide sequence ID" value="XM_017319236.3"/>
</dbReference>
<dbReference type="RefSeq" id="XP_017174727.1">
    <property type="nucleotide sequence ID" value="XM_017319238.1"/>
</dbReference>
<dbReference type="RefSeq" id="XP_036018417.1">
    <molecule id="Q8BZH0-2"/>
    <property type="nucleotide sequence ID" value="XM_036162524.1"/>
</dbReference>
<dbReference type="SMR" id="Q8BZH0"/>
<dbReference type="BioGRID" id="212848">
    <property type="interactions" value="3"/>
</dbReference>
<dbReference type="FunCoup" id="Q8BZH0">
    <property type="interactions" value="1582"/>
</dbReference>
<dbReference type="STRING" id="10090.ENSMUSP00000107063"/>
<dbReference type="TCDB" id="2.A.5.4.9">
    <property type="family name" value="the zinc (zn(2+))-iron (fe(2+)) permease (zip) family"/>
</dbReference>
<dbReference type="GlyGen" id="Q8BZH0">
    <property type="glycosylation" value="1 site"/>
</dbReference>
<dbReference type="PhosphoSitePlus" id="Q8BZH0"/>
<dbReference type="PaxDb" id="10090-ENSMUSP00000107063"/>
<dbReference type="ProteomicsDB" id="256575">
    <molecule id="Q8BZH0-1"/>
</dbReference>
<dbReference type="ProteomicsDB" id="256576">
    <molecule id="Q8BZH0-2"/>
</dbReference>
<dbReference type="Pumba" id="Q8BZH0"/>
<dbReference type="Antibodypedia" id="26741">
    <property type="antibodies" value="58 antibodies from 21 providers"/>
</dbReference>
<dbReference type="DNASU" id="68427"/>
<dbReference type="Ensembl" id="ENSMUST00000073575.12">
    <molecule id="Q8BZH0-1"/>
    <property type="protein sequence ID" value="ENSMUSP00000073263.6"/>
    <property type="gene ID" value="ENSMUSG00000002105.16"/>
</dbReference>
<dbReference type="Ensembl" id="ENSMUST00000079976.10">
    <molecule id="Q8BZH0-3"/>
    <property type="protein sequence ID" value="ENSMUSP00000078892.4"/>
    <property type="gene ID" value="ENSMUSG00000002105.16"/>
</dbReference>
<dbReference type="Ensembl" id="ENSMUST00000111436.3">
    <molecule id="Q8BZH0-2"/>
    <property type="protein sequence ID" value="ENSMUSP00000107063.3"/>
    <property type="gene ID" value="ENSMUSG00000002105.16"/>
</dbReference>
<dbReference type="GeneID" id="68427"/>
<dbReference type="KEGG" id="mmu:68427"/>
<dbReference type="UCSC" id="uc008kug.2">
    <molecule id="Q8BZH0-1"/>
    <property type="organism name" value="mouse"/>
</dbReference>
<dbReference type="UCSC" id="uc008kuh.2">
    <molecule id="Q8BZH0-2"/>
    <property type="organism name" value="mouse"/>
</dbReference>
<dbReference type="UCSC" id="uc008kui.2">
    <molecule id="Q8BZH0-3"/>
    <property type="organism name" value="mouse"/>
</dbReference>
<dbReference type="AGR" id="MGI:1915677"/>
<dbReference type="CTD" id="91252"/>
<dbReference type="MGI" id="MGI:1915677">
    <property type="gene designation" value="Slc39a13"/>
</dbReference>
<dbReference type="VEuPathDB" id="HostDB:ENSMUSG00000002105"/>
<dbReference type="eggNOG" id="KOG2694">
    <property type="taxonomic scope" value="Eukaryota"/>
</dbReference>
<dbReference type="GeneTree" id="ENSGT00940000157349"/>
<dbReference type="HOGENOM" id="CLU_015114_0_2_1"/>
<dbReference type="InParanoid" id="Q8BZH0"/>
<dbReference type="OMA" id="HEVPHHI"/>
<dbReference type="PhylomeDB" id="Q8BZH0"/>
<dbReference type="TreeFam" id="TF318470"/>
<dbReference type="BioGRID-ORCS" id="68427">
    <property type="hits" value="2 hits in 77 CRISPR screens"/>
</dbReference>
<dbReference type="ChiTaRS" id="Slc39a13">
    <property type="organism name" value="mouse"/>
</dbReference>
<dbReference type="PRO" id="PR:Q8BZH0"/>
<dbReference type="Proteomes" id="UP000000589">
    <property type="component" value="Chromosome 2"/>
</dbReference>
<dbReference type="RNAct" id="Q8BZH0">
    <property type="molecule type" value="protein"/>
</dbReference>
<dbReference type="Bgee" id="ENSMUSG00000002105">
    <property type="expression patterns" value="Expressed in right kidney and 161 other cell types or tissues"/>
</dbReference>
<dbReference type="ExpressionAtlas" id="Q8BZH0">
    <property type="expression patterns" value="baseline and differential"/>
</dbReference>
<dbReference type="GO" id="GO:0030659">
    <property type="term" value="C:cytoplasmic vesicle membrane"/>
    <property type="evidence" value="ECO:0000250"/>
    <property type="project" value="UniProtKB"/>
</dbReference>
<dbReference type="GO" id="GO:0005789">
    <property type="term" value="C:endoplasmic reticulum membrane"/>
    <property type="evidence" value="ECO:0007669"/>
    <property type="project" value="UniProtKB-SubCell"/>
</dbReference>
<dbReference type="GO" id="GO:0005794">
    <property type="term" value="C:Golgi apparatus"/>
    <property type="evidence" value="ECO:0000314"/>
    <property type="project" value="BHF-UCL"/>
</dbReference>
<dbReference type="GO" id="GO:0000139">
    <property type="term" value="C:Golgi membrane"/>
    <property type="evidence" value="ECO:0007669"/>
    <property type="project" value="UniProtKB-SubCell"/>
</dbReference>
<dbReference type="GO" id="GO:0048471">
    <property type="term" value="C:perinuclear region of cytoplasm"/>
    <property type="evidence" value="ECO:0000314"/>
    <property type="project" value="BHF-UCL"/>
</dbReference>
<dbReference type="GO" id="GO:0042803">
    <property type="term" value="F:protein homodimerization activity"/>
    <property type="evidence" value="ECO:0007669"/>
    <property type="project" value="Ensembl"/>
</dbReference>
<dbReference type="GO" id="GO:0005385">
    <property type="term" value="F:zinc ion transmembrane transporter activity"/>
    <property type="evidence" value="ECO:0000250"/>
    <property type="project" value="UniProtKB"/>
</dbReference>
<dbReference type="GO" id="GO:0050873">
    <property type="term" value="P:brown fat cell differentiation"/>
    <property type="evidence" value="ECO:0000315"/>
    <property type="project" value="UniProtKB"/>
</dbReference>
<dbReference type="GO" id="GO:0061448">
    <property type="term" value="P:connective tissue development"/>
    <property type="evidence" value="ECO:0000315"/>
    <property type="project" value="BHF-UCL"/>
</dbReference>
<dbReference type="GO" id="GO:0006882">
    <property type="term" value="P:intracellular zinc ion homeostasis"/>
    <property type="evidence" value="ECO:0000315"/>
    <property type="project" value="BHF-UCL"/>
</dbReference>
<dbReference type="GO" id="GO:0071577">
    <property type="term" value="P:zinc ion transmembrane transport"/>
    <property type="evidence" value="ECO:0000315"/>
    <property type="project" value="BHF-UCL"/>
</dbReference>
<dbReference type="GO" id="GO:0006829">
    <property type="term" value="P:zinc ion transport"/>
    <property type="evidence" value="ECO:0000250"/>
    <property type="project" value="UniProtKB"/>
</dbReference>
<dbReference type="InterPro" id="IPR003689">
    <property type="entry name" value="ZIP"/>
</dbReference>
<dbReference type="PANTHER" id="PTHR16950">
    <property type="entry name" value="ZINC TRANSPORTER SLC39A7 HISTIDINE-RICH MEMBRANE PROTEIN KE4"/>
    <property type="match status" value="1"/>
</dbReference>
<dbReference type="PANTHER" id="PTHR16950:SF16">
    <property type="entry name" value="ZINC TRANSPORTER ZIP13"/>
    <property type="match status" value="1"/>
</dbReference>
<dbReference type="Pfam" id="PF02535">
    <property type="entry name" value="Zip"/>
    <property type="match status" value="1"/>
</dbReference>
<gene>
    <name evidence="9" type="primary">Slc39a13</name>
    <name type="synonym">Zip13</name>
</gene>
<evidence type="ECO:0000250" key="1">
    <source>
        <dbReference type="UniProtKB" id="Q96H72"/>
    </source>
</evidence>
<evidence type="ECO:0000255" key="2"/>
<evidence type="ECO:0000269" key="3">
    <source>
    </source>
</evidence>
<evidence type="ECO:0000269" key="4">
    <source>
    </source>
</evidence>
<evidence type="ECO:0000303" key="5">
    <source>
    </source>
</evidence>
<evidence type="ECO:0000303" key="6">
    <source>
    </source>
</evidence>
<evidence type="ECO:0000303" key="7">
    <source>
    </source>
</evidence>
<evidence type="ECO:0000305" key="8"/>
<evidence type="ECO:0000312" key="9">
    <source>
        <dbReference type="MGI" id="MGI:1915677"/>
    </source>
</evidence>
<accession>Q8BZH0</accession>
<accession>B7ZCF2</accession>
<accession>Q497M5</accession>
<accession>Q8VDX1</accession>
<accession>Q9D1R4</accession>
<name>S39AD_MOUSE</name>